<dbReference type="EMBL" id="BC007871">
    <property type="protein sequence ID" value="AAH07871.1"/>
    <property type="molecule type" value="mRNA"/>
</dbReference>
<dbReference type="EMBL" id="BC009064">
    <property type="protein sequence ID" value="AAH09064.1"/>
    <property type="molecule type" value="mRNA"/>
</dbReference>
<dbReference type="EMBL" id="BC039322">
    <property type="protein sequence ID" value="AAH39322.1"/>
    <property type="molecule type" value="mRNA"/>
</dbReference>
<dbReference type="CCDS" id="CCDS7077.1"/>
<dbReference type="RefSeq" id="NP_001139019.1">
    <property type="nucleotide sequence ID" value="NM_001145547.2"/>
</dbReference>
<dbReference type="RefSeq" id="NP_116294.1">
    <property type="nucleotide sequence ID" value="NM_032905.5"/>
</dbReference>
<dbReference type="PDB" id="2PE8">
    <property type="method" value="X-ray"/>
    <property type="resolution" value="2.00 A"/>
    <property type="chains" value="A=301-401"/>
</dbReference>
<dbReference type="PDB" id="2PEH">
    <property type="method" value="X-ray"/>
    <property type="resolution" value="2.11 A"/>
    <property type="chains" value="A/B=301-401"/>
</dbReference>
<dbReference type="PDB" id="5LSO">
    <property type="method" value="X-ray"/>
    <property type="resolution" value="2.22 A"/>
    <property type="chains" value="A/B=301-400"/>
</dbReference>
<dbReference type="PDB" id="6HIP">
    <property type="method" value="X-ray"/>
    <property type="resolution" value="1.20 A"/>
    <property type="chains" value="A/B=301-401"/>
</dbReference>
<dbReference type="PDBsum" id="2PE8"/>
<dbReference type="PDBsum" id="2PEH"/>
<dbReference type="PDBsum" id="5LSO"/>
<dbReference type="PDBsum" id="6HIP"/>
<dbReference type="BMRB" id="Q96I25"/>
<dbReference type="SMR" id="Q96I25"/>
<dbReference type="BioGRID" id="124416">
    <property type="interactions" value="230"/>
</dbReference>
<dbReference type="CORUM" id="Q96I25"/>
<dbReference type="DIP" id="DIP-29409N"/>
<dbReference type="FunCoup" id="Q96I25">
    <property type="interactions" value="3251"/>
</dbReference>
<dbReference type="IntAct" id="Q96I25">
    <property type="interactions" value="132"/>
</dbReference>
<dbReference type="MINT" id="Q96I25"/>
<dbReference type="STRING" id="9606.ENSP00000388638"/>
<dbReference type="BindingDB" id="Q96I25"/>
<dbReference type="ChEMBL" id="CHEMBL4680038"/>
<dbReference type="GlyGen" id="Q96I25">
    <property type="glycosylation" value="1 site, 1 O-linked glycan (1 site)"/>
</dbReference>
<dbReference type="iPTMnet" id="Q96I25"/>
<dbReference type="MetOSite" id="Q96I25"/>
<dbReference type="PhosphoSitePlus" id="Q96I25"/>
<dbReference type="SwissPalm" id="Q96I25"/>
<dbReference type="BioMuta" id="RBM17"/>
<dbReference type="DMDM" id="34925383"/>
<dbReference type="jPOST" id="Q96I25"/>
<dbReference type="MassIVE" id="Q96I25"/>
<dbReference type="PaxDb" id="9606-ENSP00000388638"/>
<dbReference type="PeptideAtlas" id="Q96I25"/>
<dbReference type="ProteomicsDB" id="76807"/>
<dbReference type="Pumba" id="Q96I25"/>
<dbReference type="ABCD" id="Q96I25">
    <property type="antibodies" value="1 sequenced antibody"/>
</dbReference>
<dbReference type="Antibodypedia" id="43907">
    <property type="antibodies" value="122 antibodies from 25 providers"/>
</dbReference>
<dbReference type="DNASU" id="84991"/>
<dbReference type="Ensembl" id="ENST00000379888.9">
    <property type="protein sequence ID" value="ENSP00000369218.4"/>
    <property type="gene ID" value="ENSG00000134453.16"/>
</dbReference>
<dbReference type="Ensembl" id="ENST00000446108.5">
    <property type="protein sequence ID" value="ENSP00000388638.1"/>
    <property type="gene ID" value="ENSG00000134453.16"/>
</dbReference>
<dbReference type="GeneID" id="84991"/>
<dbReference type="KEGG" id="hsa:84991"/>
<dbReference type="MANE-Select" id="ENST00000379888.9">
    <property type="protein sequence ID" value="ENSP00000369218.4"/>
    <property type="RefSeq nucleotide sequence ID" value="NM_032905.5"/>
    <property type="RefSeq protein sequence ID" value="NP_116294.1"/>
</dbReference>
<dbReference type="UCSC" id="uc001ijb.4">
    <property type="organism name" value="human"/>
</dbReference>
<dbReference type="AGR" id="HGNC:16944"/>
<dbReference type="CTD" id="84991"/>
<dbReference type="DisGeNET" id="84991"/>
<dbReference type="GeneCards" id="RBM17"/>
<dbReference type="HGNC" id="HGNC:16944">
    <property type="gene designation" value="RBM17"/>
</dbReference>
<dbReference type="HPA" id="ENSG00000134453">
    <property type="expression patterns" value="Low tissue specificity"/>
</dbReference>
<dbReference type="MIM" id="606935">
    <property type="type" value="gene"/>
</dbReference>
<dbReference type="neXtProt" id="NX_Q96I25"/>
<dbReference type="OpenTargets" id="ENSG00000134453"/>
<dbReference type="PharmGKB" id="PA134860993"/>
<dbReference type="VEuPathDB" id="HostDB:ENSG00000134453"/>
<dbReference type="eggNOG" id="KOG1996">
    <property type="taxonomic scope" value="Eukaryota"/>
</dbReference>
<dbReference type="GeneTree" id="ENSGT00790000123099"/>
<dbReference type="HOGENOM" id="CLU_044888_0_0_1"/>
<dbReference type="InParanoid" id="Q96I25"/>
<dbReference type="OMA" id="HACFYDE"/>
<dbReference type="OrthoDB" id="5411533at2759"/>
<dbReference type="PAN-GO" id="Q96I25">
    <property type="GO annotations" value="1 GO annotation based on evolutionary models"/>
</dbReference>
<dbReference type="PhylomeDB" id="Q96I25"/>
<dbReference type="TreeFam" id="TF313987"/>
<dbReference type="PathwayCommons" id="Q96I25"/>
<dbReference type="Reactome" id="R-HSA-72163">
    <property type="pathway name" value="mRNA Splicing - Major Pathway"/>
</dbReference>
<dbReference type="SignaLink" id="Q96I25"/>
<dbReference type="SIGNOR" id="Q96I25"/>
<dbReference type="BioGRID-ORCS" id="84991">
    <property type="hits" value="812 hits in 1158 CRISPR screens"/>
</dbReference>
<dbReference type="CD-CODE" id="232F8A39">
    <property type="entry name" value="P-body"/>
</dbReference>
<dbReference type="CD-CODE" id="804901D1">
    <property type="entry name" value="Nuclear speckle"/>
</dbReference>
<dbReference type="CD-CODE" id="DEE660B4">
    <property type="entry name" value="Stress granule"/>
</dbReference>
<dbReference type="ChiTaRS" id="RBM17">
    <property type="organism name" value="human"/>
</dbReference>
<dbReference type="EvolutionaryTrace" id="Q96I25"/>
<dbReference type="GeneWiki" id="RBM17"/>
<dbReference type="GenomeRNAi" id="84991"/>
<dbReference type="Pharos" id="Q96I25">
    <property type="development level" value="Tchem"/>
</dbReference>
<dbReference type="PRO" id="PR:Q96I25"/>
<dbReference type="Proteomes" id="UP000005640">
    <property type="component" value="Chromosome 10"/>
</dbReference>
<dbReference type="RNAct" id="Q96I25">
    <property type="molecule type" value="protein"/>
</dbReference>
<dbReference type="Bgee" id="ENSG00000134453">
    <property type="expression patterns" value="Expressed in metanephros cortex and 185 other cell types or tissues"/>
</dbReference>
<dbReference type="ExpressionAtlas" id="Q96I25">
    <property type="expression patterns" value="baseline and differential"/>
</dbReference>
<dbReference type="GO" id="GO:0005654">
    <property type="term" value="C:nucleoplasm"/>
    <property type="evidence" value="ECO:0000314"/>
    <property type="project" value="HPA"/>
</dbReference>
<dbReference type="GO" id="GO:0005681">
    <property type="term" value="C:spliceosomal complex"/>
    <property type="evidence" value="ECO:0007669"/>
    <property type="project" value="UniProtKB-KW"/>
</dbReference>
<dbReference type="GO" id="GO:0003723">
    <property type="term" value="F:RNA binding"/>
    <property type="evidence" value="ECO:0007669"/>
    <property type="project" value="UniProtKB-KW"/>
</dbReference>
<dbReference type="GO" id="GO:0000380">
    <property type="term" value="P:alternative mRNA splicing, via spliceosome"/>
    <property type="evidence" value="ECO:0000315"/>
    <property type="project" value="UniProtKB"/>
</dbReference>
<dbReference type="GO" id="GO:0045292">
    <property type="term" value="P:mRNA cis splicing, via spliceosome"/>
    <property type="evidence" value="ECO:0007669"/>
    <property type="project" value="InterPro"/>
</dbReference>
<dbReference type="CDD" id="cd12647">
    <property type="entry name" value="RRM_UHM_SPF45"/>
    <property type="match status" value="1"/>
</dbReference>
<dbReference type="FunFam" id="3.30.70.330:FF:000079">
    <property type="entry name" value="Putative splicing factor 45"/>
    <property type="match status" value="1"/>
</dbReference>
<dbReference type="Gene3D" id="3.30.70.330">
    <property type="match status" value="1"/>
</dbReference>
<dbReference type="IDEAL" id="IID00221"/>
<dbReference type="InterPro" id="IPR000467">
    <property type="entry name" value="G_patch_dom"/>
</dbReference>
<dbReference type="InterPro" id="IPR012677">
    <property type="entry name" value="Nucleotide-bd_a/b_plait_sf"/>
</dbReference>
<dbReference type="InterPro" id="IPR035979">
    <property type="entry name" value="RBD_domain_sf"/>
</dbReference>
<dbReference type="InterPro" id="IPR040052">
    <property type="entry name" value="RBM17"/>
</dbReference>
<dbReference type="InterPro" id="IPR000504">
    <property type="entry name" value="RRM_dom"/>
</dbReference>
<dbReference type="InterPro" id="IPR003954">
    <property type="entry name" value="RRM_dom_euk"/>
</dbReference>
<dbReference type="InterPro" id="IPR034653">
    <property type="entry name" value="SPF45_RRM"/>
</dbReference>
<dbReference type="PANTHER" id="PTHR13288:SF8">
    <property type="entry name" value="SPLICING FACTOR 45"/>
    <property type="match status" value="1"/>
</dbReference>
<dbReference type="PANTHER" id="PTHR13288">
    <property type="entry name" value="SPLICING FACTOR 45 SPF45"/>
    <property type="match status" value="1"/>
</dbReference>
<dbReference type="Pfam" id="PF01585">
    <property type="entry name" value="G-patch"/>
    <property type="match status" value="1"/>
</dbReference>
<dbReference type="Pfam" id="PF00076">
    <property type="entry name" value="RRM_1"/>
    <property type="match status" value="1"/>
</dbReference>
<dbReference type="PIRSF" id="PIRSF031066">
    <property type="entry name" value="Splicing_factor_SPF45"/>
    <property type="match status" value="1"/>
</dbReference>
<dbReference type="SMART" id="SM00443">
    <property type="entry name" value="G_patch"/>
    <property type="match status" value="1"/>
</dbReference>
<dbReference type="SMART" id="SM00361">
    <property type="entry name" value="RRM_1"/>
    <property type="match status" value="1"/>
</dbReference>
<dbReference type="SUPFAM" id="SSF54928">
    <property type="entry name" value="RNA-binding domain, RBD"/>
    <property type="match status" value="1"/>
</dbReference>
<dbReference type="PROSITE" id="PS50174">
    <property type="entry name" value="G_PATCH"/>
    <property type="match status" value="1"/>
</dbReference>
<sequence length="401" mass="44962">MSLYDDLGVETSDSKTEGWSKNFKLLQSQLQVKKAALTQAKSQRTKQSTVLAPVIDLKRGGSSDDRQIVDTPPHVAAGLKDPVPSGFSAGEVLIPLADEYDPMFPNDYEKVVKRQREERQRQRELERQKEIEEREKRRKDRHEASGFARRPDPDSDEDEDYERERRKRSMGGAAIAPPTSLVEKDKELPRDFPYEEDSRPRSQSSKAAIPPPVYEEQDRPRSPTGPSNSFLANMGGTVAHKIMQKYGFREGQGLGKHEQGLSTALSVEKTSKRGGKIIVGDATEKDASKKSDSNPLTEILKCPTKVVLLRNMVGAGEVDEDLEVETKEECEKYGKVGKCVIFEIPGAPDDEAVRIFLEFERVESAIKAVVDLNGRYFGGRVVKACFYNLDKFRVLDLAEQV</sequence>
<evidence type="ECO:0000250" key="1">
    <source>
        <dbReference type="UniProtKB" id="Q8JZX4"/>
    </source>
</evidence>
<evidence type="ECO:0000255" key="2">
    <source>
        <dbReference type="PROSITE-ProRule" id="PRU00092"/>
    </source>
</evidence>
<evidence type="ECO:0000256" key="3">
    <source>
        <dbReference type="SAM" id="MobiDB-lite"/>
    </source>
</evidence>
<evidence type="ECO:0000269" key="4">
    <source>
    </source>
</evidence>
<evidence type="ECO:0000269" key="5">
    <source>
    </source>
</evidence>
<evidence type="ECO:0000269" key="6">
    <source>
    </source>
</evidence>
<evidence type="ECO:0000305" key="7"/>
<evidence type="ECO:0007744" key="8">
    <source>
    </source>
</evidence>
<evidence type="ECO:0007744" key="9">
    <source>
    </source>
</evidence>
<evidence type="ECO:0007744" key="10">
    <source>
    </source>
</evidence>
<evidence type="ECO:0007744" key="11">
    <source>
    </source>
</evidence>
<evidence type="ECO:0007744" key="12">
    <source>
    </source>
</evidence>
<evidence type="ECO:0007744" key="13">
    <source>
    </source>
</evidence>
<evidence type="ECO:0007744" key="14">
    <source>
    </source>
</evidence>
<evidence type="ECO:0007744" key="15">
    <source>
    </source>
</evidence>
<evidence type="ECO:0007744" key="16">
    <source>
    </source>
</evidence>
<evidence type="ECO:0007744" key="17">
    <source>
    </source>
</evidence>
<evidence type="ECO:0007744" key="18">
    <source>
    </source>
</evidence>
<evidence type="ECO:0007744" key="19">
    <source>
    </source>
</evidence>
<evidence type="ECO:0007744" key="20">
    <source>
    </source>
</evidence>
<evidence type="ECO:0007829" key="21">
    <source>
        <dbReference type="PDB" id="6HIP"/>
    </source>
</evidence>
<keyword id="KW-0002">3D-structure</keyword>
<keyword id="KW-0007">Acetylation</keyword>
<keyword id="KW-0903">Direct protein sequencing</keyword>
<keyword id="KW-1017">Isopeptide bond</keyword>
<keyword id="KW-0507">mRNA processing</keyword>
<keyword id="KW-0508">mRNA splicing</keyword>
<keyword id="KW-0539">Nucleus</keyword>
<keyword id="KW-0597">Phosphoprotein</keyword>
<keyword id="KW-1267">Proteomics identification</keyword>
<keyword id="KW-1185">Reference proteome</keyword>
<keyword id="KW-0694">RNA-binding</keyword>
<keyword id="KW-0747">Spliceosome</keyword>
<keyword id="KW-0832">Ubl conjugation</keyword>
<proteinExistence type="evidence at protein level"/>
<name>SPF45_HUMAN</name>
<protein>
    <recommendedName>
        <fullName>Splicing factor 45</fullName>
    </recommendedName>
    <alternativeName>
        <fullName>45 kDa-splicing factor</fullName>
    </alternativeName>
    <alternativeName>
        <fullName>RNA-binding motif protein 17</fullName>
    </alternativeName>
</protein>
<accession>Q96I25</accession>
<accession>Q96GY6</accession>
<feature type="initiator methionine" description="Removed" evidence="12 17">
    <location>
        <position position="1"/>
    </location>
</feature>
<feature type="chain" id="PRO_0000081903" description="Splicing factor 45">
    <location>
        <begin position="2"/>
        <end position="401"/>
    </location>
</feature>
<feature type="domain" description="G-patch" evidence="2">
    <location>
        <begin position="235"/>
        <end position="283"/>
    </location>
</feature>
<feature type="domain" description="RRM">
    <location>
        <begin position="306"/>
        <end position="385"/>
    </location>
</feature>
<feature type="region of interest" description="Disordered" evidence="3">
    <location>
        <begin position="57"/>
        <end position="84"/>
    </location>
</feature>
<feature type="region of interest" description="Disordered" evidence="3">
    <location>
        <begin position="114"/>
        <end position="233"/>
    </location>
</feature>
<feature type="compositionally biased region" description="Basic and acidic residues" evidence="3">
    <location>
        <begin position="57"/>
        <end position="68"/>
    </location>
</feature>
<feature type="compositionally biased region" description="Basic and acidic residues" evidence="3">
    <location>
        <begin position="114"/>
        <end position="153"/>
    </location>
</feature>
<feature type="compositionally biased region" description="Basic and acidic residues" evidence="3">
    <location>
        <begin position="182"/>
        <end position="200"/>
    </location>
</feature>
<feature type="modified residue" description="N-acetylserine" evidence="12 17">
    <location>
        <position position="2"/>
    </location>
</feature>
<feature type="modified residue" description="Phosphoserine" evidence="18">
    <location>
        <position position="2"/>
    </location>
</feature>
<feature type="modified residue" description="N6-acetyllysine" evidence="13">
    <location>
        <position position="21"/>
    </location>
</feature>
<feature type="modified residue" description="N6-acetyllysine; alternate" evidence="1">
    <location>
        <position position="41"/>
    </location>
</feature>
<feature type="modified residue" description="Phosphothreonine" evidence="8 18">
    <location>
        <position position="71"/>
    </location>
</feature>
<feature type="modified residue" description="Phosphoserine" evidence="8 9 10 11 14 15 16 18 19">
    <location>
        <position position="155"/>
    </location>
</feature>
<feature type="modified residue" description="Phosphoserine" evidence="10 15 18">
    <location>
        <position position="169"/>
    </location>
</feature>
<feature type="modified residue" description="Phosphoserine" evidence="15 16 19">
    <location>
        <position position="222"/>
    </location>
</feature>
<feature type="modified residue" description="Phosphothreonine" evidence="18">
    <location>
        <position position="237"/>
    </location>
</feature>
<feature type="modified residue" description="Phosphoserine" evidence="18">
    <location>
        <position position="266"/>
    </location>
</feature>
<feature type="modified residue" description="Phosphoserine" evidence="18">
    <location>
        <position position="291"/>
    </location>
</feature>
<feature type="modified residue" description="Phosphoserine" evidence="18">
    <location>
        <position position="293"/>
    </location>
</feature>
<feature type="cross-link" description="Glycyl lysine isopeptide (Lys-Gly) (interchain with G-Cter in SUMO2)" evidence="20">
    <location>
        <position position="15"/>
    </location>
</feature>
<feature type="cross-link" description="Glycyl lysine isopeptide (Lys-Gly) (interchain with G-Cter in SUMO2)" evidence="20">
    <location>
        <position position="24"/>
    </location>
</feature>
<feature type="cross-link" description="Glycyl lysine isopeptide (Lys-Gly) (interchain with G-Cter in SUMO2)" evidence="20">
    <location>
        <position position="33"/>
    </location>
</feature>
<feature type="cross-link" description="Glycyl lysine isopeptide (Lys-Gly) (interchain with G-Cter in SUMO2); alternate" evidence="20">
    <location>
        <position position="41"/>
    </location>
</feature>
<feature type="cross-link" description="Glycyl lysine isopeptide (Lys-Gly) (interchain with G-Cter in SUMO2)" evidence="20">
    <location>
        <position position="58"/>
    </location>
</feature>
<feature type="cross-link" description="Glycyl lysine isopeptide (Lys-Gly) (interchain with G-Cter in SUMO2)" evidence="20">
    <location>
        <position position="256"/>
    </location>
</feature>
<feature type="cross-link" description="Glycyl lysine isopeptide (Lys-Gly) (interchain with G-Cter in SUMO2)" evidence="20">
    <location>
        <position position="276"/>
    </location>
</feature>
<feature type="mutagenesis site" description="Impairs interaction with SF1; has minor effect on interaction with SF3B1 and U2AF2." evidence="5">
    <original>D</original>
    <variation>A</variation>
    <location>
        <position position="319"/>
    </location>
</feature>
<feature type="mutagenesis site" description="Abolishes interaction with SF3B1, SF1 and U2AF2. Abolishes regulation of alternative splicing." evidence="5">
    <original>D</original>
    <variation>K</variation>
    <location>
        <position position="319"/>
    </location>
</feature>
<feature type="mutagenesis site" description="Impairs interaction with SF3B1, SF1 and U2AF2. Abolishes regulation of alternative splicing." evidence="5">
    <original>R</original>
    <variation>A</variation>
    <location>
        <position position="375"/>
    </location>
</feature>
<feature type="mutagenesis site" description="Impairs interaction with SF3B1, SF1 and U2AF2. Abolishes regulation of alternative splicing." evidence="5">
    <original>Y</original>
    <variation>A</variation>
    <location>
        <position position="376"/>
    </location>
</feature>
<feature type="mutagenesis site" description="Impairs interaction with SF1 and U2AF2 and abolishes interaction with SF3B1. Abolishes regulation of alternative splicing." evidence="5">
    <original>F</original>
    <variation>A</variation>
    <location>
        <position position="377"/>
    </location>
</feature>
<feature type="sequence conflict" description="In Ref. 1; AAH09064." evidence="7" ref="1">
    <original>Y</original>
    <variation>H</variation>
    <location>
        <position position="214"/>
    </location>
</feature>
<feature type="strand" evidence="21">
    <location>
        <begin position="305"/>
        <end position="313"/>
    </location>
</feature>
<feature type="helix" evidence="21">
    <location>
        <begin position="320"/>
        <end position="330"/>
    </location>
</feature>
<feature type="turn" evidence="21">
    <location>
        <begin position="331"/>
        <end position="333"/>
    </location>
</feature>
<feature type="strand" evidence="21">
    <location>
        <begin position="340"/>
        <end position="343"/>
    </location>
</feature>
<feature type="turn" evidence="21">
    <location>
        <begin position="349"/>
        <end position="351"/>
    </location>
</feature>
<feature type="strand" evidence="21">
    <location>
        <begin position="352"/>
        <end position="361"/>
    </location>
</feature>
<feature type="helix" evidence="21">
    <location>
        <begin position="362"/>
        <end position="372"/>
    </location>
</feature>
<feature type="strand" evidence="21">
    <location>
        <begin position="383"/>
        <end position="387"/>
    </location>
</feature>
<feature type="helix" evidence="21">
    <location>
        <begin position="389"/>
        <end position="393"/>
    </location>
</feature>
<comment type="function">
    <text evidence="4 5">Splice factor that binds to the single-stranded 3'AG at the exon/intron border and promotes its utilization in the second catalytic step. Involved in the regulation of alternative splicing and the utilization of cryptic splice sites. Promotes the utilization of a cryptic splice site created by the beta-110 mutation in the HBB gene. The resulting frameshift leads to sickle cell anemia.</text>
</comment>
<comment type="subunit">
    <text evidence="5 6">Binds SXL. Associates with the spliceosome. Interacts with SF3B1, SF1 and U2AF2.</text>
</comment>
<comment type="interaction">
    <interactant intactId="EBI-740272">
        <id>Q96I25</id>
    </interactant>
    <interactant intactId="EBI-930964">
        <id>P54253</id>
        <label>ATXN1</label>
    </interactant>
    <organismsDiffer>false</organismsDiffer>
    <experiments>5</experiments>
</comment>
<comment type="interaction">
    <interactant intactId="EBI-740272">
        <id>Q96I25</id>
    </interactant>
    <interactant intactId="EBI-1049597">
        <id>P27797</id>
        <label>CALR</label>
    </interactant>
    <organismsDiffer>false</organismsDiffer>
    <experiments>3</experiments>
</comment>
<comment type="interaction">
    <interactant intactId="EBI-740272">
        <id>Q96I25</id>
    </interactant>
    <interactant intactId="EBI-2808089">
        <id>Q8IYT3</id>
        <label>CCDC170</label>
    </interactant>
    <organismsDiffer>false</organismsDiffer>
    <experiments>3</experiments>
</comment>
<comment type="interaction">
    <interactant intactId="EBI-740272">
        <id>Q96I25</id>
    </interactant>
    <interactant intactId="EBI-10175300">
        <id>Q8TD31-3</id>
        <label>CCHCR1</label>
    </interactant>
    <organismsDiffer>false</organismsDiffer>
    <experiments>6</experiments>
</comment>
<comment type="interaction">
    <interactant intactId="EBI-740272">
        <id>Q96I25</id>
    </interactant>
    <interactant intactId="EBI-747776">
        <id>Q53EZ4</id>
        <label>CEP55</label>
    </interactant>
    <organismsDiffer>false</organismsDiffer>
    <experiments>8</experiments>
</comment>
<comment type="interaction">
    <interactant intactId="EBI-740272">
        <id>Q96I25</id>
    </interactant>
    <interactant intactId="EBI-1237044">
        <id>O43143</id>
        <label>DHX15</label>
    </interactant>
    <organismsDiffer>false</organismsDiffer>
    <experiments>12</experiments>
</comment>
<comment type="interaction">
    <interactant intactId="EBI-740272">
        <id>Q96I25</id>
    </interactant>
    <interactant intactId="EBI-351007">
        <id>P36957</id>
        <label>DLST</label>
    </interactant>
    <organismsDiffer>false</organismsDiffer>
    <experiments>3</experiments>
</comment>
<comment type="interaction">
    <interactant intactId="EBI-740272">
        <id>Q96I25</id>
    </interactant>
    <interactant intactId="EBI-10175124">
        <id>Q8IZU0</id>
        <label>FAM9B</label>
    </interactant>
    <organismsDiffer>false</organismsDiffer>
    <experiments>3</experiments>
</comment>
<comment type="interaction">
    <interactant intactId="EBI-740272">
        <id>Q96I25</id>
    </interactant>
    <interactant intactId="EBI-618309">
        <id>Q08379</id>
        <label>GOLGA2</label>
    </interactant>
    <organismsDiffer>false</organismsDiffer>
    <experiments>8</experiments>
</comment>
<comment type="interaction">
    <interactant intactId="EBI-740272">
        <id>Q96I25</id>
    </interactant>
    <interactant intactId="EBI-7116203">
        <id>O75031</id>
        <label>HSF2BP</label>
    </interactant>
    <organismsDiffer>false</organismsDiffer>
    <experiments>3</experiments>
</comment>
<comment type="interaction">
    <interactant intactId="EBI-740272">
        <id>Q96I25</id>
    </interactant>
    <interactant intactId="EBI-745878">
        <id>Q9H0B3</id>
        <label>IQCN</label>
    </interactant>
    <organismsDiffer>false</organismsDiffer>
    <experiments>3</experiments>
</comment>
<comment type="interaction">
    <interactant intactId="EBI-740272">
        <id>Q96I25</id>
    </interactant>
    <interactant intactId="EBI-1055945">
        <id>Q8TDX7</id>
        <label>NEK7</label>
    </interactant>
    <organismsDiffer>false</organismsDiffer>
    <experiments>3</experiments>
</comment>
<comment type="interaction">
    <interactant intactId="EBI-740272">
        <id>Q96I25</id>
    </interactant>
    <interactant intactId="EBI-716404">
        <id>P16284</id>
        <label>PECAM1</label>
    </interactant>
    <organismsDiffer>false</organismsDiffer>
    <experiments>3</experiments>
</comment>
<comment type="interaction">
    <interactant intactId="EBI-740272">
        <id>Q96I25</id>
    </interactant>
    <interactant intactId="EBI-721802">
        <id>Q9BZL4</id>
        <label>PPP1R12C</label>
    </interactant>
    <organismsDiffer>false</organismsDiffer>
    <experiments>3</experiments>
</comment>
<comment type="interaction">
    <interactant intactId="EBI-740272">
        <id>Q96I25</id>
    </interactant>
    <interactant intactId="EBI-10289057">
        <id>Q9BZL4-5</id>
        <label>PPP1R12C</label>
    </interactant>
    <organismsDiffer>false</organismsDiffer>
    <experiments>3</experiments>
</comment>
<comment type="interaction">
    <interactant intactId="EBI-740272">
        <id>Q96I25</id>
    </interactant>
    <interactant intactId="EBI-2798044">
        <id>Q2TAL8</id>
        <label>QRICH1</label>
    </interactant>
    <organismsDiffer>false</organismsDiffer>
    <experiments>4</experiments>
</comment>
<comment type="interaction">
    <interactant intactId="EBI-740272">
        <id>Q96I25</id>
    </interactant>
    <interactant intactId="EBI-711613">
        <id>P21673</id>
        <label>SAT1</label>
    </interactant>
    <organismsDiffer>false</organismsDiffer>
    <experiments>13</experiments>
</comment>
<comment type="interaction">
    <interactant intactId="EBI-740272">
        <id>Q96I25</id>
    </interactant>
    <interactant intactId="EBI-744603">
        <id>Q15637</id>
        <label>SF1</label>
    </interactant>
    <organismsDiffer>false</organismsDiffer>
    <experiments>8</experiments>
</comment>
<comment type="interaction">
    <interactant intactId="EBI-740272">
        <id>Q96I25</id>
    </interactant>
    <interactant intactId="EBI-12223157">
        <id>Q15637-4</id>
        <label>SF1</label>
    </interactant>
    <organismsDiffer>false</organismsDiffer>
    <experiments>3</experiments>
</comment>
<comment type="interaction">
    <interactant intactId="EBI-740272">
        <id>Q96I25</id>
    </interactant>
    <interactant intactId="EBI-2462271">
        <id>Q15428</id>
        <label>SF3A2</label>
    </interactant>
    <organismsDiffer>false</organismsDiffer>
    <experiments>4</experiments>
</comment>
<comment type="interaction">
    <interactant intactId="EBI-740272">
        <id>Q96I25</id>
    </interactant>
    <interactant intactId="EBI-876542">
        <id>O75533</id>
        <label>SF3B1</label>
    </interactant>
    <organismsDiffer>false</organismsDiffer>
    <experiments>7</experiments>
</comment>
<comment type="interaction">
    <interactant intactId="EBI-740272">
        <id>Q96I25</id>
    </interactant>
    <interactant intactId="EBI-15565798">
        <id>O75533-1</id>
        <label>SF3B1</label>
    </interactant>
    <organismsDiffer>false</organismsDiffer>
    <experiments>3</experiments>
</comment>
<comment type="interaction">
    <interactant intactId="EBI-740272">
        <id>Q96I25</id>
    </interactant>
    <interactant intactId="EBI-2691671">
        <id>Q8IWZ8</id>
        <label>SUGP1</label>
    </interactant>
    <organismsDiffer>false</organismsDiffer>
    <experiments>3</experiments>
</comment>
<comment type="interaction">
    <interactant intactId="EBI-740272">
        <id>Q96I25</id>
    </interactant>
    <interactant intactId="EBI-742339">
        <id>P26368</id>
        <label>U2AF2</label>
    </interactant>
    <organismsDiffer>false</organismsDiffer>
    <experiments>2</experiments>
</comment>
<comment type="interaction">
    <interactant intactId="EBI-740272">
        <id>Q96I25</id>
    </interactant>
    <interactant intactId="EBI-310697">
        <id>O15042</id>
        <label>U2SURP</label>
    </interactant>
    <organismsDiffer>false</organismsDiffer>
    <experiments>4</experiments>
</comment>
<comment type="interaction">
    <interactant intactId="EBI-740272">
        <id>Q96I25</id>
    </interactant>
    <interactant intactId="EBI-720609">
        <id>O76024</id>
        <label>WFS1</label>
    </interactant>
    <organismsDiffer>false</organismsDiffer>
    <experiments>3</experiments>
</comment>
<comment type="subcellular location">
    <subcellularLocation>
        <location evidence="6">Nucleus</location>
    </subcellularLocation>
</comment>
<organism>
    <name type="scientific">Homo sapiens</name>
    <name type="common">Human</name>
    <dbReference type="NCBI Taxonomy" id="9606"/>
    <lineage>
        <taxon>Eukaryota</taxon>
        <taxon>Metazoa</taxon>
        <taxon>Chordata</taxon>
        <taxon>Craniata</taxon>
        <taxon>Vertebrata</taxon>
        <taxon>Euteleostomi</taxon>
        <taxon>Mammalia</taxon>
        <taxon>Eutheria</taxon>
        <taxon>Euarchontoglires</taxon>
        <taxon>Primates</taxon>
        <taxon>Haplorrhini</taxon>
        <taxon>Catarrhini</taxon>
        <taxon>Hominidae</taxon>
        <taxon>Homo</taxon>
    </lineage>
</organism>
<reference key="1">
    <citation type="journal article" date="2004" name="Genome Res.">
        <title>The status, quality, and expansion of the NIH full-length cDNA project: the Mammalian Gene Collection (MGC).</title>
        <authorList>
            <consortium name="The MGC Project Team"/>
        </authorList>
    </citation>
    <scope>NUCLEOTIDE SEQUENCE [LARGE SCALE MRNA]</scope>
    <source>
        <tissue>Eye</tissue>
        <tissue>Testis</tissue>
        <tissue>Uterus</tissue>
    </source>
</reference>
<reference key="2">
    <citation type="journal article" date="1998" name="Nat. Genet.">
        <title>Mass spectrometry and EST-database searching allows characterization of the multi-protein spliceosome complex.</title>
        <authorList>
            <person name="Neubauer G."/>
            <person name="King A."/>
            <person name="Rappsilber J."/>
            <person name="Calvio C."/>
            <person name="Watson M."/>
            <person name="Ajuh P."/>
            <person name="Sleeman J."/>
            <person name="Lamond A.I."/>
            <person name="Mann M."/>
        </authorList>
    </citation>
    <scope>PARTIAL PROTEIN SEQUENCE</scope>
    <scope>IDENTIFICATION BY MASS SPECTROMETRY</scope>
    <scope>SUBCELLULAR LOCATION</scope>
    <scope>INTERACTION WITH THE SPLICEOSOME</scope>
</reference>
<reference key="3">
    <citation type="journal article" date="2002" name="Cell">
        <title>Splicing regulation at the second catalytic step by Sex-lethal involves 3' splice site recognition by SPF45.</title>
        <authorList>
            <person name="Lallena M.J."/>
            <person name="Chalmers K.J."/>
            <person name="Llamazares S."/>
            <person name="Lamond A.I."/>
            <person name="Valcarcel J."/>
        </authorList>
    </citation>
    <scope>FUNCTION</scope>
</reference>
<reference key="4">
    <citation type="journal article" date="2006" name="Cell">
        <title>Global, in vivo, and site-specific phosphorylation dynamics in signaling networks.</title>
        <authorList>
            <person name="Olsen J.V."/>
            <person name="Blagoev B."/>
            <person name="Gnad F."/>
            <person name="Macek B."/>
            <person name="Kumar C."/>
            <person name="Mortensen P."/>
            <person name="Mann M."/>
        </authorList>
    </citation>
    <scope>PHOSPHORYLATION [LARGE SCALE ANALYSIS] AT THR-71 AND SER-155</scope>
    <scope>IDENTIFICATION BY MASS SPECTROMETRY [LARGE SCALE ANALYSIS]</scope>
    <source>
        <tissue>Cervix carcinoma</tissue>
    </source>
</reference>
<reference key="5">
    <citation type="journal article" date="2008" name="J. Proteome Res.">
        <title>Phosphorylation analysis of primary human T lymphocytes using sequential IMAC and titanium oxide enrichment.</title>
        <authorList>
            <person name="Carrascal M."/>
            <person name="Ovelleiro D."/>
            <person name="Casas V."/>
            <person name="Gay M."/>
            <person name="Abian J."/>
        </authorList>
    </citation>
    <scope>PHOSPHORYLATION [LARGE SCALE ANALYSIS] AT SER-155</scope>
    <scope>IDENTIFICATION BY MASS SPECTROMETRY [LARGE SCALE ANALYSIS]</scope>
    <source>
        <tissue>T-cell</tissue>
    </source>
</reference>
<reference key="6">
    <citation type="journal article" date="2008" name="Proc. Natl. Acad. Sci. U.S.A.">
        <title>A quantitative atlas of mitotic phosphorylation.</title>
        <authorList>
            <person name="Dephoure N."/>
            <person name="Zhou C."/>
            <person name="Villen J."/>
            <person name="Beausoleil S.A."/>
            <person name="Bakalarski C.E."/>
            <person name="Elledge S.J."/>
            <person name="Gygi S.P."/>
        </authorList>
    </citation>
    <scope>PHOSPHORYLATION [LARGE SCALE ANALYSIS] AT SER-155 AND SER-169</scope>
    <scope>IDENTIFICATION BY MASS SPECTROMETRY [LARGE SCALE ANALYSIS]</scope>
    <source>
        <tissue>Cervix carcinoma</tissue>
    </source>
</reference>
<reference key="7">
    <citation type="journal article" date="2008" name="Proteomics">
        <title>Large-scale phosphoproteome analysis of human liver tissue by enrichment and fractionation of phosphopeptides with strong anion exchange chromatography.</title>
        <authorList>
            <person name="Han G."/>
            <person name="Ye M."/>
            <person name="Zhou H."/>
            <person name="Jiang X."/>
            <person name="Feng S."/>
            <person name="Jiang X."/>
            <person name="Tian R."/>
            <person name="Wan D."/>
            <person name="Zou H."/>
            <person name="Gu J."/>
        </authorList>
    </citation>
    <scope>PHOSPHORYLATION [LARGE SCALE ANALYSIS] AT SER-155</scope>
    <scope>IDENTIFICATION BY MASS SPECTROMETRY [LARGE SCALE ANALYSIS]</scope>
    <source>
        <tissue>Liver</tissue>
    </source>
</reference>
<reference key="8">
    <citation type="journal article" date="2009" name="Anal. Chem.">
        <title>Lys-N and trypsin cover complementary parts of the phosphoproteome in a refined SCX-based approach.</title>
        <authorList>
            <person name="Gauci S."/>
            <person name="Helbig A.O."/>
            <person name="Slijper M."/>
            <person name="Krijgsveld J."/>
            <person name="Heck A.J."/>
            <person name="Mohammed S."/>
        </authorList>
    </citation>
    <scope>ACETYLATION [LARGE SCALE ANALYSIS] AT SER-2</scope>
    <scope>CLEAVAGE OF INITIATOR METHIONINE [LARGE SCALE ANALYSIS]</scope>
    <scope>IDENTIFICATION BY MASS SPECTROMETRY [LARGE SCALE ANALYSIS]</scope>
</reference>
<reference key="9">
    <citation type="journal article" date="2009" name="Sci. Signal.">
        <title>Quantitative phosphoproteomic analysis of T cell receptor signaling reveals system-wide modulation of protein-protein interactions.</title>
        <authorList>
            <person name="Mayya V."/>
            <person name="Lundgren D.H."/>
            <person name="Hwang S.-I."/>
            <person name="Rezaul K."/>
            <person name="Wu L."/>
            <person name="Eng J.K."/>
            <person name="Rodionov V."/>
            <person name="Han D.K."/>
        </authorList>
    </citation>
    <scope>PHOSPHORYLATION [LARGE SCALE ANALYSIS] AT SER-155</scope>
    <scope>IDENTIFICATION BY MASS SPECTROMETRY [LARGE SCALE ANALYSIS]</scope>
    <source>
        <tissue>Leukemic T-cell</tissue>
    </source>
</reference>
<reference key="10">
    <citation type="journal article" date="2009" name="Science">
        <title>Lysine acetylation targets protein complexes and co-regulates major cellular functions.</title>
        <authorList>
            <person name="Choudhary C."/>
            <person name="Kumar C."/>
            <person name="Gnad F."/>
            <person name="Nielsen M.L."/>
            <person name="Rehman M."/>
            <person name="Walther T.C."/>
            <person name="Olsen J.V."/>
            <person name="Mann M."/>
        </authorList>
    </citation>
    <scope>ACETYLATION [LARGE SCALE ANALYSIS] AT LYS-21</scope>
    <scope>IDENTIFICATION BY MASS SPECTROMETRY [LARGE SCALE ANALYSIS]</scope>
</reference>
<reference key="11">
    <citation type="journal article" date="2010" name="Sci. Signal.">
        <title>Quantitative phosphoproteomics reveals widespread full phosphorylation site occupancy during mitosis.</title>
        <authorList>
            <person name="Olsen J.V."/>
            <person name="Vermeulen M."/>
            <person name="Santamaria A."/>
            <person name="Kumar C."/>
            <person name="Miller M.L."/>
            <person name="Jensen L.J."/>
            <person name="Gnad F."/>
            <person name="Cox J."/>
            <person name="Jensen T.S."/>
            <person name="Nigg E.A."/>
            <person name="Brunak S."/>
            <person name="Mann M."/>
        </authorList>
    </citation>
    <scope>PHOSPHORYLATION [LARGE SCALE ANALYSIS] AT SER-155; SER-169 AND SER-222</scope>
    <scope>IDENTIFICATION BY MASS SPECTROMETRY [LARGE SCALE ANALYSIS]</scope>
    <source>
        <tissue>Cervix carcinoma</tissue>
    </source>
</reference>
<reference key="12">
    <citation type="journal article" date="2011" name="BMC Syst. Biol.">
        <title>Initial characterization of the human central proteome.</title>
        <authorList>
            <person name="Burkard T.R."/>
            <person name="Planyavsky M."/>
            <person name="Kaupe I."/>
            <person name="Breitwieser F.P."/>
            <person name="Buerckstuemmer T."/>
            <person name="Bennett K.L."/>
            <person name="Superti-Furga G."/>
            <person name="Colinge J."/>
        </authorList>
    </citation>
    <scope>IDENTIFICATION BY MASS SPECTROMETRY [LARGE SCALE ANALYSIS]</scope>
</reference>
<reference key="13">
    <citation type="journal article" date="2011" name="Sci. Signal.">
        <title>System-wide temporal characterization of the proteome and phosphoproteome of human embryonic stem cell differentiation.</title>
        <authorList>
            <person name="Rigbolt K.T."/>
            <person name="Prokhorova T.A."/>
            <person name="Akimov V."/>
            <person name="Henningsen J."/>
            <person name="Johansen P.T."/>
            <person name="Kratchmarova I."/>
            <person name="Kassem M."/>
            <person name="Mann M."/>
            <person name="Olsen J.V."/>
            <person name="Blagoev B."/>
        </authorList>
    </citation>
    <scope>PHOSPHORYLATION [LARGE SCALE ANALYSIS] AT SER-155 AND SER-222</scope>
    <scope>IDENTIFICATION BY MASS SPECTROMETRY [LARGE SCALE ANALYSIS]</scope>
</reference>
<reference key="14">
    <citation type="journal article" date="2012" name="Mol. Cell. Proteomics">
        <title>Comparative large-scale characterisation of plant vs. mammal proteins reveals similar and idiosyncratic N-alpha acetylation features.</title>
        <authorList>
            <person name="Bienvenut W.V."/>
            <person name="Sumpton D."/>
            <person name="Martinez A."/>
            <person name="Lilla S."/>
            <person name="Espagne C."/>
            <person name="Meinnel T."/>
            <person name="Giglione C."/>
        </authorList>
    </citation>
    <scope>ACETYLATION [LARGE SCALE ANALYSIS] AT SER-2</scope>
    <scope>CLEAVAGE OF INITIATOR METHIONINE [LARGE SCALE ANALYSIS]</scope>
    <scope>IDENTIFICATION BY MASS SPECTROMETRY [LARGE SCALE ANALYSIS]</scope>
</reference>
<reference key="15">
    <citation type="journal article" date="2013" name="J. Proteome Res.">
        <title>Toward a comprehensive characterization of a human cancer cell phosphoproteome.</title>
        <authorList>
            <person name="Zhou H."/>
            <person name="Di Palma S."/>
            <person name="Preisinger C."/>
            <person name="Peng M."/>
            <person name="Polat A.N."/>
            <person name="Heck A.J."/>
            <person name="Mohammed S."/>
        </authorList>
    </citation>
    <scope>PHOSPHORYLATION [LARGE SCALE ANALYSIS] AT SER-2; THR-71; SER-155; SER-169; THR-237; SER-266; SER-291 AND SER-293</scope>
    <scope>IDENTIFICATION BY MASS SPECTROMETRY [LARGE SCALE ANALYSIS]</scope>
    <source>
        <tissue>Cervix carcinoma</tissue>
        <tissue>Erythroleukemia</tissue>
    </source>
</reference>
<reference key="16">
    <citation type="journal article" date="2014" name="J. Proteomics">
        <title>An enzyme assisted RP-RPLC approach for in-depth analysis of human liver phosphoproteome.</title>
        <authorList>
            <person name="Bian Y."/>
            <person name="Song C."/>
            <person name="Cheng K."/>
            <person name="Dong M."/>
            <person name="Wang F."/>
            <person name="Huang J."/>
            <person name="Sun D."/>
            <person name="Wang L."/>
            <person name="Ye M."/>
            <person name="Zou H."/>
        </authorList>
    </citation>
    <scope>PHOSPHORYLATION [LARGE SCALE ANALYSIS] AT SER-155 AND SER-222</scope>
    <scope>IDENTIFICATION BY MASS SPECTROMETRY [LARGE SCALE ANALYSIS]</scope>
    <source>
        <tissue>Liver</tissue>
    </source>
</reference>
<reference key="17">
    <citation type="journal article" date="2017" name="Nat. Struct. Mol. Biol.">
        <title>Site-specific mapping of the human SUMO proteome reveals co-modification with phosphorylation.</title>
        <authorList>
            <person name="Hendriks I.A."/>
            <person name="Lyon D."/>
            <person name="Young C."/>
            <person name="Jensen L.J."/>
            <person name="Vertegaal A.C."/>
            <person name="Nielsen M.L."/>
        </authorList>
    </citation>
    <scope>SUMOYLATION [LARGE SCALE ANALYSIS] AT LYS-15; LYS-24; LYS-33; LYS-41; LYS-58; LYS-256 AND LYS-276</scope>
    <scope>IDENTIFICATION BY MASS SPECTROMETRY [LARGE SCALE ANALYSIS]</scope>
</reference>
<reference key="18">
    <citation type="journal article" date="2007" name="Nat. Struct. Mol. Biol.">
        <title>U2AF-homology motif interactions are required for alternative splicing regulation by SPF45.</title>
        <authorList>
            <person name="Corsini L."/>
            <person name="Bonnal S."/>
            <person name="Basquin J."/>
            <person name="Hothorn M."/>
            <person name="Scheffzek K."/>
            <person name="Valcarcel J."/>
            <person name="Sattler M."/>
        </authorList>
    </citation>
    <scope>X-RAY CRYSTALLOGRAPHY (2.00 ANGSTROMS) OF 301-401 IN COMPLEX WITH SF3B1</scope>
    <scope>FUNCTION</scope>
    <scope>INTERACTION WITH SF3B1; SF1 AND U2AF2</scope>
    <scope>MUTAGENESIS OF ASP-319; ARG-375; TYR-376 AND PHE-377</scope>
</reference>
<gene>
    <name type="primary">RBM17</name>
    <name type="synonym">SPF45</name>
</gene>